<keyword id="KW-0010">Activator</keyword>
<keyword id="KW-0112">Calmodulin-binding</keyword>
<keyword id="KW-0963">Cytoplasm</keyword>
<keyword id="KW-0221">Differentiation</keyword>
<keyword id="KW-0238">DNA-binding</keyword>
<keyword id="KW-0539">Nucleus</keyword>
<keyword id="KW-0678">Repressor</keyword>
<keyword id="KW-0726">Sexual differentiation</keyword>
<keyword id="KW-0804">Transcription</keyword>
<keyword id="KW-0805">Transcription regulation</keyword>
<feature type="chain" id="PRO_0000048685" description="Sex-determining region Y protein">
    <location>
        <begin position="1"/>
        <end position="227"/>
    </location>
</feature>
<feature type="DNA-binding region" description="HMG box" evidence="3">
    <location>
        <begin position="54"/>
        <end position="122"/>
    </location>
</feature>
<protein>
    <recommendedName>
        <fullName>Sex-determining region Y protein</fullName>
    </recommendedName>
    <alternativeName>
        <fullName>Testis-determining factor</fullName>
    </alternativeName>
</protein>
<name>SRY_MOSBE</name>
<organism>
    <name type="scientific">Moschus berezovskii</name>
    <name type="common">Chinese forest musk deer</name>
    <dbReference type="NCBI Taxonomy" id="68408"/>
    <lineage>
        <taxon>Eukaryota</taxon>
        <taxon>Metazoa</taxon>
        <taxon>Chordata</taxon>
        <taxon>Craniata</taxon>
        <taxon>Vertebrata</taxon>
        <taxon>Euteleostomi</taxon>
        <taxon>Mammalia</taxon>
        <taxon>Eutheria</taxon>
        <taxon>Laurasiatheria</taxon>
        <taxon>Artiodactyla</taxon>
        <taxon>Ruminantia</taxon>
        <taxon>Pecora</taxon>
        <taxon>Moschidae</taxon>
        <taxon>Moschus</taxon>
    </lineage>
</organism>
<accession>Q67EX7</accession>
<reference key="1">
    <citation type="submission" date="2003-07" db="EMBL/GenBank/DDBJ databases">
        <title>Cloning of SRY from Moschus berezovskii and Moschus chrysogaster and a phylogeny with Cervidae, Bovidae animals.</title>
        <authorList>
            <person name="Zhang L."/>
            <person name="Zou F.D."/>
            <person name="Yue B.S."/>
            <person name="Zhao E.M."/>
        </authorList>
    </citation>
    <scope>NUCLEOTIDE SEQUENCE [GENOMIC DNA]</scope>
</reference>
<comment type="function">
    <text evidence="1 2">Transcriptional regulator that controls a genetic switch in male development. It is necessary and sufficient for initiating male sex determination by directing the development of supporting cell precursors (pre-Sertoli cells) as Sertoli rather than granulosa cells. Involved in different aspects of gene regulation including promoter activation or repression. Binds to the DNA consensus sequence 5'-[AT]AACAA[AT]-3'. SRY HMG box recognizes DNA by partial intercalation in the minor groove and promotes DNA bending. Also involved in pre-mRNA splicing (By similarity). In male adult brain involved in the maintenance of motor functions of dopaminergic neurons (By similarity).</text>
</comment>
<comment type="subunit">
    <text evidence="2">Interacts with CALM, EP300, HDAC3, KPNB1, ZNF208 isoform KRAB-O, PARP1, SLC9A3R2 and WT1. The interaction with EP300 modulates its DNA-binding activity. The interaction with KPNB1 is sensitive to dissociation by Ran in the GTP-bound form. Interaction with PARP1 impaired its DNA-binding activity.</text>
</comment>
<comment type="subcellular location">
    <subcellularLocation>
        <location evidence="2">Nucleus speckle</location>
    </subcellularLocation>
    <subcellularLocation>
        <location evidence="2">Cytoplasm</location>
    </subcellularLocation>
    <subcellularLocation>
        <location evidence="2">Nucleus</location>
    </subcellularLocation>
</comment>
<comment type="similarity">
    <text evidence="4">Belongs to the SRY family.</text>
</comment>
<comment type="online information" name="Protein Spotlight">
    <link uri="https://www.proteinspotlight.org/back_issues/080"/>
    <text>The tenuous nature of sex - Issue 80 of March 2007</text>
</comment>
<gene>
    <name type="primary">SRY</name>
    <name type="synonym">TDF</name>
</gene>
<sequence length="227" mass="26434">MFRVLNNDVYSPAVVQQQTTLAFGKASSLCTDNRSANDQCEMGENFRESGQDHIKRPMNAFIVWSRERRRKVALENPQMQNSEISKQLGYEWKRLTDAEKRPFFEEAQRLLAIHQDKYPGYKYRPRRKAKRPQNSLPSVSSILCNQMSVETLHPFTYRDGCAKTTYSPMESQLSRSQSMTSSLLQKEHHSSWTSLGHNRVTMATHIFADFPFYQSLEPRLSCAYFPY</sequence>
<evidence type="ECO:0000250" key="1">
    <source>
        <dbReference type="UniProtKB" id="P36394"/>
    </source>
</evidence>
<evidence type="ECO:0000250" key="2">
    <source>
        <dbReference type="UniProtKB" id="Q05066"/>
    </source>
</evidence>
<evidence type="ECO:0000255" key="3">
    <source>
        <dbReference type="PROSITE-ProRule" id="PRU00267"/>
    </source>
</evidence>
<evidence type="ECO:0000305" key="4"/>
<proteinExistence type="inferred from homology"/>
<dbReference type="EMBL" id="AY357218">
    <property type="protein sequence ID" value="AAQ67730.1"/>
    <property type="molecule type" value="Genomic_DNA"/>
</dbReference>
<dbReference type="RefSeq" id="XP_055284394.1">
    <property type="nucleotide sequence ID" value="XM_055428419.1"/>
</dbReference>
<dbReference type="SMR" id="Q67EX7"/>
<dbReference type="GeneID" id="129557785"/>
<dbReference type="GO" id="GO:0005737">
    <property type="term" value="C:cytoplasm"/>
    <property type="evidence" value="ECO:0007669"/>
    <property type="project" value="UniProtKB-SubCell"/>
</dbReference>
<dbReference type="GO" id="GO:0016607">
    <property type="term" value="C:nuclear speck"/>
    <property type="evidence" value="ECO:0007669"/>
    <property type="project" value="UniProtKB-SubCell"/>
</dbReference>
<dbReference type="GO" id="GO:0005634">
    <property type="term" value="C:nucleus"/>
    <property type="evidence" value="ECO:0000250"/>
    <property type="project" value="UniProtKB"/>
</dbReference>
<dbReference type="GO" id="GO:0005516">
    <property type="term" value="F:calmodulin binding"/>
    <property type="evidence" value="ECO:0007669"/>
    <property type="project" value="UniProtKB-KW"/>
</dbReference>
<dbReference type="GO" id="GO:0001228">
    <property type="term" value="F:DNA-binding transcription activator activity, RNA polymerase II-specific"/>
    <property type="evidence" value="ECO:0007669"/>
    <property type="project" value="TreeGrafter"/>
</dbReference>
<dbReference type="GO" id="GO:0000978">
    <property type="term" value="F:RNA polymerase II cis-regulatory region sequence-specific DNA binding"/>
    <property type="evidence" value="ECO:0007669"/>
    <property type="project" value="TreeGrafter"/>
</dbReference>
<dbReference type="GO" id="GO:0030154">
    <property type="term" value="P:cell differentiation"/>
    <property type="evidence" value="ECO:0007669"/>
    <property type="project" value="UniProtKB-KW"/>
</dbReference>
<dbReference type="GO" id="GO:0030238">
    <property type="term" value="P:male sex determination"/>
    <property type="evidence" value="ECO:0007669"/>
    <property type="project" value="InterPro"/>
</dbReference>
<dbReference type="GO" id="GO:0007548">
    <property type="term" value="P:sex differentiation"/>
    <property type="evidence" value="ECO:0007669"/>
    <property type="project" value="UniProtKB-KW"/>
</dbReference>
<dbReference type="CDD" id="cd22028">
    <property type="entry name" value="HMG-box_SoxA_SoxB_SoxG"/>
    <property type="match status" value="1"/>
</dbReference>
<dbReference type="FunFam" id="1.10.30.10:FF:000002">
    <property type="entry name" value="transcription factor Sox-2"/>
    <property type="match status" value="1"/>
</dbReference>
<dbReference type="Gene3D" id="1.10.30.10">
    <property type="entry name" value="High mobility group box domain"/>
    <property type="match status" value="1"/>
</dbReference>
<dbReference type="InterPro" id="IPR009071">
    <property type="entry name" value="HMG_box_dom"/>
</dbReference>
<dbReference type="InterPro" id="IPR036910">
    <property type="entry name" value="HMG_box_dom_sf"/>
</dbReference>
<dbReference type="InterPro" id="IPR017253">
    <property type="entry name" value="SRY"/>
</dbReference>
<dbReference type="InterPro" id="IPR050140">
    <property type="entry name" value="SRY-related_HMG-box_TF-like"/>
</dbReference>
<dbReference type="PANTHER" id="PTHR10270:SF161">
    <property type="entry name" value="SEX-DETERMINING REGION Y PROTEIN"/>
    <property type="match status" value="1"/>
</dbReference>
<dbReference type="PANTHER" id="PTHR10270">
    <property type="entry name" value="SOX TRANSCRIPTION FACTOR"/>
    <property type="match status" value="1"/>
</dbReference>
<dbReference type="Pfam" id="PF00505">
    <property type="entry name" value="HMG_box"/>
    <property type="match status" value="1"/>
</dbReference>
<dbReference type="PIRSF" id="PIRSF037653">
    <property type="entry name" value="SRY"/>
    <property type="match status" value="1"/>
</dbReference>
<dbReference type="SMART" id="SM00398">
    <property type="entry name" value="HMG"/>
    <property type="match status" value="1"/>
</dbReference>
<dbReference type="SUPFAM" id="SSF47095">
    <property type="entry name" value="HMG-box"/>
    <property type="match status" value="1"/>
</dbReference>
<dbReference type="PROSITE" id="PS50118">
    <property type="entry name" value="HMG_BOX_2"/>
    <property type="match status" value="1"/>
</dbReference>